<comment type="function">
    <text evidence="1">Carrier of the growing fatty acid chain in fatty acid biosynthesis.</text>
</comment>
<comment type="pathway">
    <text evidence="1">Lipid metabolism; fatty acid biosynthesis.</text>
</comment>
<comment type="subcellular location">
    <subcellularLocation>
        <location evidence="1">Cytoplasm</location>
    </subcellularLocation>
</comment>
<comment type="PTM">
    <text evidence="1">4'-phosphopantetheine is transferred from CoA to a specific serine of apo-ACP by AcpS. This modification is essential for activity because fatty acids are bound in thioester linkage to the sulfhydryl of the prosthetic group.</text>
</comment>
<comment type="similarity">
    <text evidence="1">Belongs to the acyl carrier protein (ACP) family.</text>
</comment>
<accession>Q5SL79</accession>
<gene>
    <name evidence="1" type="primary">acpP</name>
    <name type="ordered locus">TTHA0414</name>
</gene>
<name>ACP_THET8</name>
<reference key="1">
    <citation type="submission" date="2004-11" db="EMBL/GenBank/DDBJ databases">
        <title>Complete genome sequence of Thermus thermophilus HB8.</title>
        <authorList>
            <person name="Masui R."/>
            <person name="Kurokawa K."/>
            <person name="Nakagawa N."/>
            <person name="Tokunaga F."/>
            <person name="Koyama Y."/>
            <person name="Shibata T."/>
            <person name="Oshima T."/>
            <person name="Yokoyama S."/>
            <person name="Yasunaga T."/>
            <person name="Kuramitsu S."/>
        </authorList>
    </citation>
    <scope>NUCLEOTIDE SEQUENCE [LARGE SCALE GENOMIC DNA]</scope>
    <source>
        <strain>ATCC 27634 / DSM 579 / HB8</strain>
    </source>
</reference>
<reference key="2">
    <citation type="submission" date="2006-05" db="PDB data bank">
        <title>Crystal structure of the acyl carrier protein from Thermus thermophilus HB8.</title>
        <authorList>
            <consortium name="RIKEN structural genomics initiative (RSGI)"/>
        </authorList>
    </citation>
    <scope>X-RAY CRYSTALLOGRAPHY (1.5 ANGSTROMS)</scope>
</reference>
<keyword id="KW-0002">3D-structure</keyword>
<keyword id="KW-0963">Cytoplasm</keyword>
<keyword id="KW-0275">Fatty acid biosynthesis</keyword>
<keyword id="KW-0276">Fatty acid metabolism</keyword>
<keyword id="KW-0444">Lipid biosynthesis</keyword>
<keyword id="KW-0443">Lipid metabolism</keyword>
<keyword id="KW-0596">Phosphopantetheine</keyword>
<keyword id="KW-0597">Phosphoprotein</keyword>
<keyword id="KW-1185">Reference proteome</keyword>
<dbReference type="EMBL" id="AP008226">
    <property type="protein sequence ID" value="BAD70237.1"/>
    <property type="molecule type" value="Genomic_DNA"/>
</dbReference>
<dbReference type="RefSeq" id="WP_008631656.1">
    <property type="nucleotide sequence ID" value="NC_006461.1"/>
</dbReference>
<dbReference type="RefSeq" id="YP_143680.1">
    <property type="nucleotide sequence ID" value="NC_006461.1"/>
</dbReference>
<dbReference type="PDB" id="1X3O">
    <property type="method" value="X-ray"/>
    <property type="resolution" value="1.50 A"/>
    <property type="chains" value="A=1-80"/>
</dbReference>
<dbReference type="PDBsum" id="1X3O"/>
<dbReference type="SMR" id="Q5SL79"/>
<dbReference type="EnsemblBacteria" id="BAD70237">
    <property type="protein sequence ID" value="BAD70237"/>
    <property type="gene ID" value="BAD70237"/>
</dbReference>
<dbReference type="GeneID" id="3168477"/>
<dbReference type="KEGG" id="ttj:TTHA0414"/>
<dbReference type="PATRIC" id="fig|300852.9.peg.414"/>
<dbReference type="eggNOG" id="COG0236">
    <property type="taxonomic scope" value="Bacteria"/>
</dbReference>
<dbReference type="HOGENOM" id="CLU_108696_5_1_0"/>
<dbReference type="PhylomeDB" id="Q5SL79"/>
<dbReference type="UniPathway" id="UPA00094"/>
<dbReference type="EvolutionaryTrace" id="Q5SL79"/>
<dbReference type="Proteomes" id="UP000000532">
    <property type="component" value="Chromosome"/>
</dbReference>
<dbReference type="GO" id="GO:0005829">
    <property type="term" value="C:cytosol"/>
    <property type="evidence" value="ECO:0007669"/>
    <property type="project" value="TreeGrafter"/>
</dbReference>
<dbReference type="GO" id="GO:0016020">
    <property type="term" value="C:membrane"/>
    <property type="evidence" value="ECO:0007669"/>
    <property type="project" value="GOC"/>
</dbReference>
<dbReference type="GO" id="GO:0000035">
    <property type="term" value="F:acyl binding"/>
    <property type="evidence" value="ECO:0007669"/>
    <property type="project" value="TreeGrafter"/>
</dbReference>
<dbReference type="GO" id="GO:0000036">
    <property type="term" value="F:acyl carrier activity"/>
    <property type="evidence" value="ECO:0007669"/>
    <property type="project" value="UniProtKB-UniRule"/>
</dbReference>
<dbReference type="GO" id="GO:0009245">
    <property type="term" value="P:lipid A biosynthetic process"/>
    <property type="evidence" value="ECO:0007669"/>
    <property type="project" value="TreeGrafter"/>
</dbReference>
<dbReference type="FunFam" id="1.10.1200.10:FF:000003">
    <property type="entry name" value="Acyl carrier protein"/>
    <property type="match status" value="1"/>
</dbReference>
<dbReference type="Gene3D" id="1.10.1200.10">
    <property type="entry name" value="ACP-like"/>
    <property type="match status" value="1"/>
</dbReference>
<dbReference type="HAMAP" id="MF_01217">
    <property type="entry name" value="Acyl_carrier"/>
    <property type="match status" value="1"/>
</dbReference>
<dbReference type="InterPro" id="IPR003231">
    <property type="entry name" value="ACP"/>
</dbReference>
<dbReference type="InterPro" id="IPR036736">
    <property type="entry name" value="ACP-like_sf"/>
</dbReference>
<dbReference type="InterPro" id="IPR009081">
    <property type="entry name" value="PP-bd_ACP"/>
</dbReference>
<dbReference type="InterPro" id="IPR006162">
    <property type="entry name" value="Ppantetheine_attach_site"/>
</dbReference>
<dbReference type="NCBIfam" id="TIGR00517">
    <property type="entry name" value="acyl_carrier"/>
    <property type="match status" value="1"/>
</dbReference>
<dbReference type="NCBIfam" id="NF002148">
    <property type="entry name" value="PRK00982.1-2"/>
    <property type="match status" value="1"/>
</dbReference>
<dbReference type="NCBIfam" id="NF002150">
    <property type="entry name" value="PRK00982.1-4"/>
    <property type="match status" value="1"/>
</dbReference>
<dbReference type="NCBIfam" id="NF002151">
    <property type="entry name" value="PRK00982.1-5"/>
    <property type="match status" value="1"/>
</dbReference>
<dbReference type="PANTHER" id="PTHR20863">
    <property type="entry name" value="ACYL CARRIER PROTEIN"/>
    <property type="match status" value="1"/>
</dbReference>
<dbReference type="PANTHER" id="PTHR20863:SF76">
    <property type="entry name" value="CARRIER DOMAIN-CONTAINING PROTEIN"/>
    <property type="match status" value="1"/>
</dbReference>
<dbReference type="Pfam" id="PF00550">
    <property type="entry name" value="PP-binding"/>
    <property type="match status" value="1"/>
</dbReference>
<dbReference type="SUPFAM" id="SSF47336">
    <property type="entry name" value="ACP-like"/>
    <property type="match status" value="1"/>
</dbReference>
<dbReference type="PROSITE" id="PS50075">
    <property type="entry name" value="CARRIER"/>
    <property type="match status" value="1"/>
</dbReference>
<dbReference type="PROSITE" id="PS00012">
    <property type="entry name" value="PHOSPHOPANTETHEINE"/>
    <property type="match status" value="1"/>
</dbReference>
<sequence length="80" mass="9014">MTEQEIFEKVKAVIADKLQVEPEKVTLEARFIEDLGADSLDTVELIMGLEDEFGLEISDEEAEKIRTVKDAVEYIKAKLG</sequence>
<protein>
    <recommendedName>
        <fullName evidence="1">Acyl carrier protein</fullName>
        <shortName evidence="1">ACP</shortName>
    </recommendedName>
</protein>
<feature type="chain" id="PRO_1000085618" description="Acyl carrier protein">
    <location>
        <begin position="1"/>
        <end position="80"/>
    </location>
</feature>
<feature type="domain" description="Carrier" evidence="2">
    <location>
        <begin position="4"/>
        <end position="79"/>
    </location>
</feature>
<feature type="modified residue" description="O-(pantetheine 4'-phosphoryl)serine" evidence="2">
    <location>
        <position position="39"/>
    </location>
</feature>
<feature type="helix" evidence="3">
    <location>
        <begin position="3"/>
        <end position="18"/>
    </location>
</feature>
<feature type="helix" evidence="3">
    <location>
        <begin position="22"/>
        <end position="24"/>
    </location>
</feature>
<feature type="turn" evidence="3">
    <location>
        <begin position="31"/>
        <end position="35"/>
    </location>
</feature>
<feature type="helix" evidence="3">
    <location>
        <begin position="39"/>
        <end position="53"/>
    </location>
</feature>
<feature type="helix" evidence="3">
    <location>
        <begin position="59"/>
        <end position="64"/>
    </location>
</feature>
<feature type="helix" evidence="3">
    <location>
        <begin position="68"/>
        <end position="79"/>
    </location>
</feature>
<proteinExistence type="evidence at protein level"/>
<organism>
    <name type="scientific">Thermus thermophilus (strain ATCC 27634 / DSM 579 / HB8)</name>
    <dbReference type="NCBI Taxonomy" id="300852"/>
    <lineage>
        <taxon>Bacteria</taxon>
        <taxon>Thermotogati</taxon>
        <taxon>Deinococcota</taxon>
        <taxon>Deinococci</taxon>
        <taxon>Thermales</taxon>
        <taxon>Thermaceae</taxon>
        <taxon>Thermus</taxon>
    </lineage>
</organism>
<evidence type="ECO:0000255" key="1">
    <source>
        <dbReference type="HAMAP-Rule" id="MF_01217"/>
    </source>
</evidence>
<evidence type="ECO:0000255" key="2">
    <source>
        <dbReference type="PROSITE-ProRule" id="PRU00258"/>
    </source>
</evidence>
<evidence type="ECO:0007829" key="3">
    <source>
        <dbReference type="PDB" id="1X3O"/>
    </source>
</evidence>